<proteinExistence type="predicted"/>
<name>YS64_CAEEL</name>
<organism>
    <name type="scientific">Caenorhabditis elegans</name>
    <dbReference type="NCBI Taxonomy" id="6239"/>
    <lineage>
        <taxon>Eukaryota</taxon>
        <taxon>Metazoa</taxon>
        <taxon>Ecdysozoa</taxon>
        <taxon>Nematoda</taxon>
        <taxon>Chromadorea</taxon>
        <taxon>Rhabditida</taxon>
        <taxon>Rhabditina</taxon>
        <taxon>Rhabditomorpha</taxon>
        <taxon>Rhabditoidea</taxon>
        <taxon>Rhabditidae</taxon>
        <taxon>Peloderinae</taxon>
        <taxon>Caenorhabditis</taxon>
    </lineage>
</organism>
<accession>Q09380</accession>
<protein>
    <recommendedName>
        <fullName>Uncharacterized protein ZK675.4</fullName>
    </recommendedName>
</protein>
<sequence>MLKLFCLFAAALVLFHVDITSACGSSTDSEYIQNPVFQMQISPPVGWTYFPSTPSVTSQAIWYFVGQSNDTTTAKNRADAELTAAMLEALIAANMQTQGVTIANDFQPIQIENPQTTTPTGSLYGKVEGGALVSTAPGVTTGAILTYTPYHITLRVTVNNIGATRFYWNIAENTFLQKMTMNYKAQFTGDVTVTKV</sequence>
<reference key="1">
    <citation type="journal article" date="1998" name="Science">
        <title>Genome sequence of the nematode C. elegans: a platform for investigating biology.</title>
        <authorList>
            <consortium name="The C. elegans sequencing consortium"/>
        </authorList>
    </citation>
    <scope>NUCLEOTIDE SEQUENCE [LARGE SCALE GENOMIC DNA]</scope>
    <source>
        <strain>Bristol N2</strain>
    </source>
</reference>
<gene>
    <name type="ORF">ZK675.4</name>
</gene>
<dbReference type="EMBL" id="Z46812">
    <property type="protein sequence ID" value="CAA86846.1"/>
    <property type="molecule type" value="Genomic_DNA"/>
</dbReference>
<dbReference type="PIR" id="T27972">
    <property type="entry name" value="T27972"/>
</dbReference>
<dbReference type="RefSeq" id="NP_495665.1">
    <property type="nucleotide sequence ID" value="NM_063264.4"/>
</dbReference>
<dbReference type="FunCoup" id="Q09380">
    <property type="interactions" value="396"/>
</dbReference>
<dbReference type="STRING" id="6239.ZK675.4.1"/>
<dbReference type="PaxDb" id="6239-ZK675.4"/>
<dbReference type="PeptideAtlas" id="Q09380"/>
<dbReference type="EnsemblMetazoa" id="ZK675.4.1">
    <property type="protein sequence ID" value="ZK675.4.1"/>
    <property type="gene ID" value="WBGene00014067"/>
</dbReference>
<dbReference type="GeneID" id="174277"/>
<dbReference type="KEGG" id="cel:CELE_ZK675.4"/>
<dbReference type="UCSC" id="ZK675.4">
    <property type="organism name" value="c. elegans"/>
</dbReference>
<dbReference type="AGR" id="WB:WBGene00014067"/>
<dbReference type="CTD" id="174277"/>
<dbReference type="WormBase" id="ZK675.4">
    <property type="protein sequence ID" value="CE01723"/>
    <property type="gene ID" value="WBGene00014067"/>
</dbReference>
<dbReference type="eggNOG" id="ENOG502RVXK">
    <property type="taxonomic scope" value="Eukaryota"/>
</dbReference>
<dbReference type="HOGENOM" id="CLU_1391364_0_0_1"/>
<dbReference type="InParanoid" id="Q09380"/>
<dbReference type="OMA" id="GATRFYW"/>
<dbReference type="OrthoDB" id="5794956at2759"/>
<dbReference type="PRO" id="PR:Q09380"/>
<dbReference type="Proteomes" id="UP000001940">
    <property type="component" value="Chromosome II"/>
</dbReference>
<dbReference type="Bgee" id="WBGene00014067">
    <property type="expression patterns" value="Expressed in pharyngeal muscle cell (C elegans) and 3 other cell types or tissues"/>
</dbReference>
<feature type="chain" id="PRO_0000065541" description="Uncharacterized protein ZK675.4">
    <location>
        <begin position="1"/>
        <end position="196"/>
    </location>
</feature>
<keyword id="KW-1185">Reference proteome</keyword>